<feature type="chain" id="PRO_0000277977" description="Probable cytosol aminopeptidase">
    <location>
        <begin position="1"/>
        <end position="500"/>
    </location>
</feature>
<feature type="active site" evidence="1">
    <location>
        <position position="277"/>
    </location>
</feature>
<feature type="active site" evidence="1">
    <location>
        <position position="351"/>
    </location>
</feature>
<feature type="binding site" evidence="1">
    <location>
        <position position="265"/>
    </location>
    <ligand>
        <name>Mn(2+)</name>
        <dbReference type="ChEBI" id="CHEBI:29035"/>
        <label>2</label>
    </ligand>
</feature>
<feature type="binding site" evidence="1">
    <location>
        <position position="270"/>
    </location>
    <ligand>
        <name>Mn(2+)</name>
        <dbReference type="ChEBI" id="CHEBI:29035"/>
        <label>1</label>
    </ligand>
</feature>
<feature type="binding site" evidence="1">
    <location>
        <position position="270"/>
    </location>
    <ligand>
        <name>Mn(2+)</name>
        <dbReference type="ChEBI" id="CHEBI:29035"/>
        <label>2</label>
    </ligand>
</feature>
<feature type="binding site" evidence="1">
    <location>
        <position position="288"/>
    </location>
    <ligand>
        <name>Mn(2+)</name>
        <dbReference type="ChEBI" id="CHEBI:29035"/>
        <label>2</label>
    </ligand>
</feature>
<feature type="binding site" evidence="1">
    <location>
        <position position="347"/>
    </location>
    <ligand>
        <name>Mn(2+)</name>
        <dbReference type="ChEBI" id="CHEBI:29035"/>
        <label>1</label>
    </ligand>
</feature>
<feature type="binding site" evidence="1">
    <location>
        <position position="349"/>
    </location>
    <ligand>
        <name>Mn(2+)</name>
        <dbReference type="ChEBI" id="CHEBI:29035"/>
        <label>1</label>
    </ligand>
</feature>
<feature type="binding site" evidence="1">
    <location>
        <position position="349"/>
    </location>
    <ligand>
        <name>Mn(2+)</name>
        <dbReference type="ChEBI" id="CHEBI:29035"/>
        <label>2</label>
    </ligand>
</feature>
<accession>Q4UKD7</accession>
<comment type="function">
    <text evidence="1">Presumably involved in the processing and regular turnover of intracellular proteins. Catalyzes the removal of unsubstituted N-terminal amino acids from various peptides.</text>
</comment>
<comment type="catalytic activity">
    <reaction evidence="1">
        <text>Release of an N-terminal amino acid, Xaa-|-Yaa-, in which Xaa is preferably Leu, but may be other amino acids including Pro although not Arg or Lys, and Yaa may be Pro. Amino acid amides and methyl esters are also readily hydrolyzed, but rates on arylamides are exceedingly low.</text>
        <dbReference type="EC" id="3.4.11.1"/>
    </reaction>
</comment>
<comment type="catalytic activity">
    <reaction evidence="1">
        <text>Release of an N-terminal amino acid, preferentially leucine, but not glutamic or aspartic acids.</text>
        <dbReference type="EC" id="3.4.11.10"/>
    </reaction>
</comment>
<comment type="cofactor">
    <cofactor evidence="1">
        <name>Mn(2+)</name>
        <dbReference type="ChEBI" id="CHEBI:29035"/>
    </cofactor>
    <text evidence="1">Binds 2 manganese ions per subunit.</text>
</comment>
<comment type="subcellular location">
    <subcellularLocation>
        <location evidence="1">Cytoplasm</location>
    </subcellularLocation>
</comment>
<comment type="similarity">
    <text evidence="1">Belongs to the peptidase M17 family.</text>
</comment>
<comment type="sequence caution" evidence="2">
    <conflict type="erroneous initiation">
        <sequence resource="EMBL-CDS" id="AAY61994"/>
    </conflict>
</comment>
<reference key="1">
    <citation type="journal article" date="2005" name="PLoS Biol.">
        <title>The genome sequence of Rickettsia felis identifies the first putative conjugative plasmid in an obligate intracellular parasite.</title>
        <authorList>
            <person name="Ogata H."/>
            <person name="Renesto P."/>
            <person name="Audic S."/>
            <person name="Robert C."/>
            <person name="Blanc G."/>
            <person name="Fournier P.-E."/>
            <person name="Parinello H."/>
            <person name="Claverie J.-M."/>
            <person name="Raoult D."/>
        </authorList>
    </citation>
    <scope>NUCLEOTIDE SEQUENCE [LARGE SCALE GENOMIC DNA]</scope>
    <source>
        <strain>ATCC VR-1525 / URRWXCal2</strain>
    </source>
</reference>
<proteinExistence type="inferred from homology"/>
<dbReference type="EC" id="3.4.11.1" evidence="1"/>
<dbReference type="EC" id="3.4.11.10" evidence="1"/>
<dbReference type="EMBL" id="CP000053">
    <property type="protein sequence ID" value="AAY61994.1"/>
    <property type="status" value="ALT_INIT"/>
    <property type="molecule type" value="Genomic_DNA"/>
</dbReference>
<dbReference type="SMR" id="Q4UKD7"/>
<dbReference type="STRING" id="315456.RF_1143"/>
<dbReference type="MEROPS" id="M17.003"/>
<dbReference type="KEGG" id="rfe:RF_1143"/>
<dbReference type="eggNOG" id="COG0260">
    <property type="taxonomic scope" value="Bacteria"/>
</dbReference>
<dbReference type="HOGENOM" id="CLU_013734_6_0_5"/>
<dbReference type="OrthoDB" id="9809354at2"/>
<dbReference type="Proteomes" id="UP000008548">
    <property type="component" value="Chromosome"/>
</dbReference>
<dbReference type="GO" id="GO:0005737">
    <property type="term" value="C:cytoplasm"/>
    <property type="evidence" value="ECO:0007669"/>
    <property type="project" value="UniProtKB-SubCell"/>
</dbReference>
<dbReference type="GO" id="GO:0030145">
    <property type="term" value="F:manganese ion binding"/>
    <property type="evidence" value="ECO:0007669"/>
    <property type="project" value="UniProtKB-UniRule"/>
</dbReference>
<dbReference type="GO" id="GO:0070006">
    <property type="term" value="F:metalloaminopeptidase activity"/>
    <property type="evidence" value="ECO:0007669"/>
    <property type="project" value="InterPro"/>
</dbReference>
<dbReference type="GO" id="GO:0006508">
    <property type="term" value="P:proteolysis"/>
    <property type="evidence" value="ECO:0007669"/>
    <property type="project" value="UniProtKB-KW"/>
</dbReference>
<dbReference type="CDD" id="cd00433">
    <property type="entry name" value="Peptidase_M17"/>
    <property type="match status" value="1"/>
</dbReference>
<dbReference type="Gene3D" id="3.40.220.10">
    <property type="entry name" value="Leucine Aminopeptidase, subunit E, domain 1"/>
    <property type="match status" value="1"/>
</dbReference>
<dbReference type="Gene3D" id="3.40.630.10">
    <property type="entry name" value="Zn peptidases"/>
    <property type="match status" value="1"/>
</dbReference>
<dbReference type="HAMAP" id="MF_00181">
    <property type="entry name" value="Cytosol_peptidase_M17"/>
    <property type="match status" value="1"/>
</dbReference>
<dbReference type="InterPro" id="IPR011356">
    <property type="entry name" value="Leucine_aapep/pepB"/>
</dbReference>
<dbReference type="InterPro" id="IPR043472">
    <property type="entry name" value="Macro_dom-like"/>
</dbReference>
<dbReference type="InterPro" id="IPR000819">
    <property type="entry name" value="Peptidase_M17_C"/>
</dbReference>
<dbReference type="InterPro" id="IPR023042">
    <property type="entry name" value="Peptidase_M17_leu_NH2_pept"/>
</dbReference>
<dbReference type="InterPro" id="IPR008283">
    <property type="entry name" value="Peptidase_M17_N"/>
</dbReference>
<dbReference type="NCBIfam" id="NF002073">
    <property type="entry name" value="PRK00913.1-2"/>
    <property type="match status" value="1"/>
</dbReference>
<dbReference type="NCBIfam" id="NF002074">
    <property type="entry name" value="PRK00913.1-4"/>
    <property type="match status" value="1"/>
</dbReference>
<dbReference type="NCBIfam" id="NF002075">
    <property type="entry name" value="PRK00913.2-2"/>
    <property type="match status" value="1"/>
</dbReference>
<dbReference type="NCBIfam" id="NF002077">
    <property type="entry name" value="PRK00913.2-4"/>
    <property type="match status" value="1"/>
</dbReference>
<dbReference type="NCBIfam" id="NF002083">
    <property type="entry name" value="PRK00913.3-5"/>
    <property type="match status" value="1"/>
</dbReference>
<dbReference type="PANTHER" id="PTHR11963:SF23">
    <property type="entry name" value="CYTOSOL AMINOPEPTIDASE"/>
    <property type="match status" value="1"/>
</dbReference>
<dbReference type="PANTHER" id="PTHR11963">
    <property type="entry name" value="LEUCINE AMINOPEPTIDASE-RELATED"/>
    <property type="match status" value="1"/>
</dbReference>
<dbReference type="Pfam" id="PF00883">
    <property type="entry name" value="Peptidase_M17"/>
    <property type="match status" value="1"/>
</dbReference>
<dbReference type="Pfam" id="PF02789">
    <property type="entry name" value="Peptidase_M17_N"/>
    <property type="match status" value="1"/>
</dbReference>
<dbReference type="PRINTS" id="PR00481">
    <property type="entry name" value="LAMNOPPTDASE"/>
</dbReference>
<dbReference type="SUPFAM" id="SSF52949">
    <property type="entry name" value="Macro domain-like"/>
    <property type="match status" value="1"/>
</dbReference>
<dbReference type="SUPFAM" id="SSF53187">
    <property type="entry name" value="Zn-dependent exopeptidases"/>
    <property type="match status" value="1"/>
</dbReference>
<dbReference type="PROSITE" id="PS00631">
    <property type="entry name" value="CYTOSOL_AP"/>
    <property type="match status" value="1"/>
</dbReference>
<sequence>MLNINFVNEESSTNQGLVVFIDEQLKLDSNLIGLDQQHHGLISKTIQNKLQFTGKYGQIKVIPSVIKSGEVRYLIIAGLGNEEKLTEAKIEELGGKILQHAICAKISTICLKLTNRISRFTSQTFASLVASGAFLASYRFNKYRTTLKEAEKFAVESIEIFTDNSTEAAKLFEVKKLIAEAVFFTRDICNEPSNIKTPQVYAERIVDILEPFGVDVDVIGEREMKNLGMGALLGVGQGSQNESKLVVMEYKGGNKDVPTIALVGKGVIFDTGGISLKPSSNMHLMRYDMGGSAAVVGAMIAVAGQKLPVNIVGVVGLVENMPSGNAQRPGDVVTTMSGQTAEVLNTDAEGRLVLADAVWYAQEKFKPKCVIDVATLTGAITVALGSTYAGCFSNNDELADKLIKVGEEVNEKLWRMPLHDEYDAMINSDIADMANIGNVPGAAGSCTAAHFIKRFIKDGVDWAHLDIAGVANSNKASALGPKGAVGYGVRLLEKFIKEYI</sequence>
<name>AMPA_RICFE</name>
<evidence type="ECO:0000255" key="1">
    <source>
        <dbReference type="HAMAP-Rule" id="MF_00181"/>
    </source>
</evidence>
<evidence type="ECO:0000305" key="2"/>
<organism>
    <name type="scientific">Rickettsia felis (strain ATCC VR-1525 / URRWXCal2)</name>
    <name type="common">Rickettsia azadi</name>
    <dbReference type="NCBI Taxonomy" id="315456"/>
    <lineage>
        <taxon>Bacteria</taxon>
        <taxon>Pseudomonadati</taxon>
        <taxon>Pseudomonadota</taxon>
        <taxon>Alphaproteobacteria</taxon>
        <taxon>Rickettsiales</taxon>
        <taxon>Rickettsiaceae</taxon>
        <taxon>Rickettsieae</taxon>
        <taxon>Rickettsia</taxon>
        <taxon>spotted fever group</taxon>
    </lineage>
</organism>
<keyword id="KW-0031">Aminopeptidase</keyword>
<keyword id="KW-0963">Cytoplasm</keyword>
<keyword id="KW-0378">Hydrolase</keyword>
<keyword id="KW-0464">Manganese</keyword>
<keyword id="KW-0479">Metal-binding</keyword>
<keyword id="KW-0645">Protease</keyword>
<gene>
    <name evidence="1" type="primary">pepA</name>
    <name type="ordered locus">RF_1143</name>
</gene>
<protein>
    <recommendedName>
        <fullName evidence="1">Probable cytosol aminopeptidase</fullName>
        <ecNumber evidence="1">3.4.11.1</ecNumber>
    </recommendedName>
    <alternativeName>
        <fullName evidence="1">Leucine aminopeptidase</fullName>
        <shortName evidence="1">LAP</shortName>
        <ecNumber evidence="1">3.4.11.10</ecNumber>
    </alternativeName>
    <alternativeName>
        <fullName evidence="1">Leucyl aminopeptidase</fullName>
    </alternativeName>
</protein>